<gene>
    <name type="ordered locus">Gura_4292</name>
</gene>
<protein>
    <recommendedName>
        <fullName evidence="1">Putative pyruvate, phosphate dikinase regulatory protein</fullName>
        <shortName evidence="1">PPDK regulatory protein</shortName>
        <ecNumber evidence="1">2.7.11.32</ecNumber>
        <ecNumber evidence="1">2.7.4.27</ecNumber>
    </recommendedName>
</protein>
<reference key="1">
    <citation type="submission" date="2007-05" db="EMBL/GenBank/DDBJ databases">
        <title>Complete sequence of Geobacter uraniireducens Rf4.</title>
        <authorList>
            <consortium name="US DOE Joint Genome Institute"/>
            <person name="Copeland A."/>
            <person name="Lucas S."/>
            <person name="Lapidus A."/>
            <person name="Barry K."/>
            <person name="Detter J.C."/>
            <person name="Glavina del Rio T."/>
            <person name="Hammon N."/>
            <person name="Israni S."/>
            <person name="Dalin E."/>
            <person name="Tice H."/>
            <person name="Pitluck S."/>
            <person name="Chertkov O."/>
            <person name="Brettin T."/>
            <person name="Bruce D."/>
            <person name="Han C."/>
            <person name="Schmutz J."/>
            <person name="Larimer F."/>
            <person name="Land M."/>
            <person name="Hauser L."/>
            <person name="Kyrpides N."/>
            <person name="Mikhailova N."/>
            <person name="Shelobolina E."/>
            <person name="Aklujkar M."/>
            <person name="Lovley D."/>
            <person name="Richardson P."/>
        </authorList>
    </citation>
    <scope>NUCLEOTIDE SEQUENCE [LARGE SCALE GENOMIC DNA]</scope>
    <source>
        <strain>ATCC BAA-1134 / JCM 13001 / Rf4</strain>
    </source>
</reference>
<evidence type="ECO:0000255" key="1">
    <source>
        <dbReference type="HAMAP-Rule" id="MF_00921"/>
    </source>
</evidence>
<proteinExistence type="inferred from homology"/>
<feature type="chain" id="PRO_1000084467" description="Putative pyruvate, phosphate dikinase regulatory protein">
    <location>
        <begin position="1"/>
        <end position="269"/>
    </location>
</feature>
<feature type="binding site" evidence="1">
    <location>
        <begin position="147"/>
        <end position="154"/>
    </location>
    <ligand>
        <name>ADP</name>
        <dbReference type="ChEBI" id="CHEBI:456216"/>
    </ligand>
</feature>
<comment type="function">
    <text evidence="1">Bifunctional serine/threonine kinase and phosphorylase involved in the regulation of the pyruvate, phosphate dikinase (PPDK) by catalyzing its phosphorylation/dephosphorylation.</text>
</comment>
<comment type="catalytic activity">
    <reaction evidence="1">
        <text>N(tele)-phospho-L-histidyl/L-threonyl-[pyruvate, phosphate dikinase] + ADP = N(tele)-phospho-L-histidyl/O-phospho-L-threonyl-[pyruvate, phosphate dikinase] + AMP + H(+)</text>
        <dbReference type="Rhea" id="RHEA:43692"/>
        <dbReference type="Rhea" id="RHEA-COMP:10650"/>
        <dbReference type="Rhea" id="RHEA-COMP:10651"/>
        <dbReference type="ChEBI" id="CHEBI:15378"/>
        <dbReference type="ChEBI" id="CHEBI:30013"/>
        <dbReference type="ChEBI" id="CHEBI:61977"/>
        <dbReference type="ChEBI" id="CHEBI:83586"/>
        <dbReference type="ChEBI" id="CHEBI:456215"/>
        <dbReference type="ChEBI" id="CHEBI:456216"/>
        <dbReference type="EC" id="2.7.11.32"/>
    </reaction>
</comment>
<comment type="catalytic activity">
    <reaction evidence="1">
        <text>N(tele)-phospho-L-histidyl/O-phospho-L-threonyl-[pyruvate, phosphate dikinase] + phosphate + H(+) = N(tele)-phospho-L-histidyl/L-threonyl-[pyruvate, phosphate dikinase] + diphosphate</text>
        <dbReference type="Rhea" id="RHEA:43696"/>
        <dbReference type="Rhea" id="RHEA-COMP:10650"/>
        <dbReference type="Rhea" id="RHEA-COMP:10651"/>
        <dbReference type="ChEBI" id="CHEBI:15378"/>
        <dbReference type="ChEBI" id="CHEBI:30013"/>
        <dbReference type="ChEBI" id="CHEBI:33019"/>
        <dbReference type="ChEBI" id="CHEBI:43474"/>
        <dbReference type="ChEBI" id="CHEBI:61977"/>
        <dbReference type="ChEBI" id="CHEBI:83586"/>
        <dbReference type="EC" id="2.7.4.27"/>
    </reaction>
</comment>
<comment type="similarity">
    <text evidence="1">Belongs to the pyruvate, phosphate/water dikinase regulatory protein family. PDRP subfamily.</text>
</comment>
<dbReference type="EC" id="2.7.11.32" evidence="1"/>
<dbReference type="EC" id="2.7.4.27" evidence="1"/>
<dbReference type="EMBL" id="CP000698">
    <property type="protein sequence ID" value="ABQ28435.1"/>
    <property type="molecule type" value="Genomic_DNA"/>
</dbReference>
<dbReference type="SMR" id="A5G9G7"/>
<dbReference type="STRING" id="351605.Gura_4292"/>
<dbReference type="KEGG" id="gur:Gura_4292"/>
<dbReference type="HOGENOM" id="CLU_046206_2_1_7"/>
<dbReference type="OrthoDB" id="9782201at2"/>
<dbReference type="Proteomes" id="UP000006695">
    <property type="component" value="Chromosome"/>
</dbReference>
<dbReference type="GO" id="GO:0043531">
    <property type="term" value="F:ADP binding"/>
    <property type="evidence" value="ECO:0007669"/>
    <property type="project" value="UniProtKB-UniRule"/>
</dbReference>
<dbReference type="GO" id="GO:0005524">
    <property type="term" value="F:ATP binding"/>
    <property type="evidence" value="ECO:0007669"/>
    <property type="project" value="InterPro"/>
</dbReference>
<dbReference type="GO" id="GO:0016776">
    <property type="term" value="F:phosphotransferase activity, phosphate group as acceptor"/>
    <property type="evidence" value="ECO:0007669"/>
    <property type="project" value="UniProtKB-UniRule"/>
</dbReference>
<dbReference type="GO" id="GO:0004674">
    <property type="term" value="F:protein serine/threonine kinase activity"/>
    <property type="evidence" value="ECO:0007669"/>
    <property type="project" value="UniProtKB-UniRule"/>
</dbReference>
<dbReference type="HAMAP" id="MF_00921">
    <property type="entry name" value="PDRP"/>
    <property type="match status" value="1"/>
</dbReference>
<dbReference type="InterPro" id="IPR005177">
    <property type="entry name" value="Kinase-pyrophosphorylase"/>
</dbReference>
<dbReference type="InterPro" id="IPR026565">
    <property type="entry name" value="PPDK_reg"/>
</dbReference>
<dbReference type="NCBIfam" id="NF003742">
    <property type="entry name" value="PRK05339.1"/>
    <property type="match status" value="1"/>
</dbReference>
<dbReference type="PANTHER" id="PTHR31756">
    <property type="entry name" value="PYRUVATE, PHOSPHATE DIKINASE REGULATORY PROTEIN 1, CHLOROPLASTIC"/>
    <property type="match status" value="1"/>
</dbReference>
<dbReference type="PANTHER" id="PTHR31756:SF3">
    <property type="entry name" value="PYRUVATE, PHOSPHATE DIKINASE REGULATORY PROTEIN 1, CHLOROPLASTIC"/>
    <property type="match status" value="1"/>
</dbReference>
<dbReference type="Pfam" id="PF03618">
    <property type="entry name" value="Kinase-PPPase"/>
    <property type="match status" value="1"/>
</dbReference>
<name>PDRP_GEOUR</name>
<sequence length="269" mass="30995">MQRIYLLSDATGETVERVVRAALTQFKNVDVKLHRMSRLRTREDISLALDEAAKQPGVIFYTLVDNVLAQYLHNEANLRELEAIDLITPLLFKLASLLGIPPQKEPGLLYQLNTEYYKRMEAVDFTVKQDDGQEPRNLYKADIVLVGVSRTSKTPLSMYLAHKGYKVANVPIVLGIEPPKELYQVEKIRVVGLIIDAKRLVDIRSARLRNMRQSPRGSYADYQRVEEELDYCRKLYRKHPDWQVIDVTNKSVEESAAEILKRYDEGFPD</sequence>
<keyword id="KW-0418">Kinase</keyword>
<keyword id="KW-0547">Nucleotide-binding</keyword>
<keyword id="KW-1185">Reference proteome</keyword>
<keyword id="KW-0723">Serine/threonine-protein kinase</keyword>
<keyword id="KW-0808">Transferase</keyword>
<organism>
    <name type="scientific">Geotalea uraniireducens (strain Rf4)</name>
    <name type="common">Geobacter uraniireducens</name>
    <dbReference type="NCBI Taxonomy" id="351605"/>
    <lineage>
        <taxon>Bacteria</taxon>
        <taxon>Pseudomonadati</taxon>
        <taxon>Thermodesulfobacteriota</taxon>
        <taxon>Desulfuromonadia</taxon>
        <taxon>Geobacterales</taxon>
        <taxon>Geobacteraceae</taxon>
        <taxon>Geotalea</taxon>
    </lineage>
</organism>
<accession>A5G9G7</accession>